<sequence length="245" mass="27443">MSSNHQHFRQPAIKGGESRVLSRRAILTADSLTLFYEDKKVIDNVSFSVKFGEIVTILGPNGGGKTSLVRVLVGINKAYKGTVRYFGKLGIGYLPQNIKINRLMPMTVEYFLLHTYLGRRAASDLEDSMKYVDVERLLKRQVAELSAGETQLVLLARCLMMKPDLIILDEPVSCMDIEAKHNFYKLVARLVTECGVSVLMTSHDLHCVMSCSDRVICVNHSIRCEGTPEEITENAKFLSVFPNNV</sequence>
<protein>
    <recommendedName>
        <fullName evidence="1">Zinc import ATP-binding protein ZnuC</fullName>
        <ecNumber evidence="1">7.2.2.20</ecNumber>
    </recommendedName>
</protein>
<dbReference type="EC" id="7.2.2.20" evidence="1"/>
<dbReference type="EMBL" id="CP000030">
    <property type="protein sequence ID" value="AAV86457.1"/>
    <property type="molecule type" value="Genomic_DNA"/>
</dbReference>
<dbReference type="RefSeq" id="WP_010263400.1">
    <property type="nucleotide sequence ID" value="NZ_AFMU01000053.1"/>
</dbReference>
<dbReference type="SMR" id="Q5PB72"/>
<dbReference type="KEGG" id="ama:AM397"/>
<dbReference type="HOGENOM" id="CLU_000604_1_11_5"/>
<dbReference type="GO" id="GO:0005886">
    <property type="term" value="C:plasma membrane"/>
    <property type="evidence" value="ECO:0007669"/>
    <property type="project" value="UniProtKB-SubCell"/>
</dbReference>
<dbReference type="GO" id="GO:0015633">
    <property type="term" value="F:ABC-type zinc transporter activity"/>
    <property type="evidence" value="ECO:0007669"/>
    <property type="project" value="UniProtKB-EC"/>
</dbReference>
<dbReference type="GO" id="GO:0005524">
    <property type="term" value="F:ATP binding"/>
    <property type="evidence" value="ECO:0007669"/>
    <property type="project" value="UniProtKB-KW"/>
</dbReference>
<dbReference type="GO" id="GO:0016887">
    <property type="term" value="F:ATP hydrolysis activity"/>
    <property type="evidence" value="ECO:0007669"/>
    <property type="project" value="InterPro"/>
</dbReference>
<dbReference type="Gene3D" id="3.40.50.300">
    <property type="entry name" value="P-loop containing nucleotide triphosphate hydrolases"/>
    <property type="match status" value="1"/>
</dbReference>
<dbReference type="InterPro" id="IPR003593">
    <property type="entry name" value="AAA+_ATPase"/>
</dbReference>
<dbReference type="InterPro" id="IPR003439">
    <property type="entry name" value="ABC_transporter-like_ATP-bd"/>
</dbReference>
<dbReference type="InterPro" id="IPR050153">
    <property type="entry name" value="Metal_Ion_Import_ABC"/>
</dbReference>
<dbReference type="InterPro" id="IPR027417">
    <property type="entry name" value="P-loop_NTPase"/>
</dbReference>
<dbReference type="PANTHER" id="PTHR42734">
    <property type="entry name" value="METAL TRANSPORT SYSTEM ATP-BINDING PROTEIN TM_0124-RELATED"/>
    <property type="match status" value="1"/>
</dbReference>
<dbReference type="PANTHER" id="PTHR42734:SF17">
    <property type="entry name" value="METAL TRANSPORT SYSTEM ATP-BINDING PROTEIN TM_0124-RELATED"/>
    <property type="match status" value="1"/>
</dbReference>
<dbReference type="Pfam" id="PF00005">
    <property type="entry name" value="ABC_tran"/>
    <property type="match status" value="1"/>
</dbReference>
<dbReference type="SMART" id="SM00382">
    <property type="entry name" value="AAA"/>
    <property type="match status" value="1"/>
</dbReference>
<dbReference type="SUPFAM" id="SSF52540">
    <property type="entry name" value="P-loop containing nucleoside triphosphate hydrolases"/>
    <property type="match status" value="1"/>
</dbReference>
<dbReference type="PROSITE" id="PS50893">
    <property type="entry name" value="ABC_TRANSPORTER_2"/>
    <property type="match status" value="1"/>
</dbReference>
<dbReference type="PROSITE" id="PS51298">
    <property type="entry name" value="ZNUC"/>
    <property type="match status" value="1"/>
</dbReference>
<accession>Q5PB72</accession>
<gene>
    <name evidence="1" type="primary">znuC</name>
    <name type="ordered locus">AM397</name>
</gene>
<comment type="function">
    <text evidence="1">Part of the ABC transporter complex ZnuABC involved in zinc import. Responsible for energy coupling to the transport system.</text>
</comment>
<comment type="catalytic activity">
    <reaction evidence="1">
        <text>Zn(2+)(out) + ATP(in) + H2O(in) = Zn(2+)(in) + ADP(in) + phosphate(in) + H(+)(in)</text>
        <dbReference type="Rhea" id="RHEA:29795"/>
        <dbReference type="ChEBI" id="CHEBI:15377"/>
        <dbReference type="ChEBI" id="CHEBI:15378"/>
        <dbReference type="ChEBI" id="CHEBI:29105"/>
        <dbReference type="ChEBI" id="CHEBI:30616"/>
        <dbReference type="ChEBI" id="CHEBI:43474"/>
        <dbReference type="ChEBI" id="CHEBI:456216"/>
        <dbReference type="EC" id="7.2.2.20"/>
    </reaction>
</comment>
<comment type="subunit">
    <text evidence="1">The complex is composed of two ATP-binding proteins (ZnuC), two transmembrane proteins (ZnuB) and a solute-binding protein (ZnuA).</text>
</comment>
<comment type="subcellular location">
    <subcellularLocation>
        <location evidence="1">Cell inner membrane</location>
        <topology evidence="1">Peripheral membrane protein</topology>
    </subcellularLocation>
</comment>
<comment type="similarity">
    <text evidence="1">Belongs to the ABC transporter superfamily. Zinc importer (TC 3.A.1.15.5) family.</text>
</comment>
<reference key="1">
    <citation type="journal article" date="2005" name="Proc. Natl. Acad. Sci. U.S.A.">
        <title>Complete genome sequencing of Anaplasma marginale reveals that the surface is skewed to two superfamilies of outer membrane proteins.</title>
        <authorList>
            <person name="Brayton K.A."/>
            <person name="Kappmeyer L.S."/>
            <person name="Herndon D.R."/>
            <person name="Dark M.J."/>
            <person name="Tibbals D.L."/>
            <person name="Palmer G.H."/>
            <person name="McGuire T.C."/>
            <person name="Knowles D.P. Jr."/>
        </authorList>
    </citation>
    <scope>NUCLEOTIDE SEQUENCE [LARGE SCALE GENOMIC DNA]</scope>
    <source>
        <strain>St. Maries</strain>
    </source>
</reference>
<organism>
    <name type="scientific">Anaplasma marginale (strain St. Maries)</name>
    <dbReference type="NCBI Taxonomy" id="234826"/>
    <lineage>
        <taxon>Bacteria</taxon>
        <taxon>Pseudomonadati</taxon>
        <taxon>Pseudomonadota</taxon>
        <taxon>Alphaproteobacteria</taxon>
        <taxon>Rickettsiales</taxon>
        <taxon>Anaplasmataceae</taxon>
        <taxon>Anaplasma</taxon>
    </lineage>
</organism>
<proteinExistence type="inferred from homology"/>
<evidence type="ECO:0000255" key="1">
    <source>
        <dbReference type="HAMAP-Rule" id="MF_01725"/>
    </source>
</evidence>
<name>ZNUC_ANAMM</name>
<feature type="chain" id="PRO_0000281493" description="Zinc import ATP-binding protein ZnuC">
    <location>
        <begin position="1"/>
        <end position="245"/>
    </location>
</feature>
<feature type="domain" description="ABC transporter" evidence="1">
    <location>
        <begin position="27"/>
        <end position="244"/>
    </location>
</feature>
<feature type="binding site" evidence="1">
    <location>
        <begin position="59"/>
        <end position="66"/>
    </location>
    <ligand>
        <name>ATP</name>
        <dbReference type="ChEBI" id="CHEBI:30616"/>
    </ligand>
</feature>
<keyword id="KW-0067">ATP-binding</keyword>
<keyword id="KW-0997">Cell inner membrane</keyword>
<keyword id="KW-1003">Cell membrane</keyword>
<keyword id="KW-0406">Ion transport</keyword>
<keyword id="KW-0472">Membrane</keyword>
<keyword id="KW-0547">Nucleotide-binding</keyword>
<keyword id="KW-1278">Translocase</keyword>
<keyword id="KW-0813">Transport</keyword>
<keyword id="KW-0862">Zinc</keyword>
<keyword id="KW-0864">Zinc transport</keyword>